<comment type="function">
    <text evidence="1">Required for insertion of 4Fe-4S clusters for at least IspG.</text>
</comment>
<comment type="cofactor">
    <cofactor evidence="1">
        <name>iron-sulfur cluster</name>
        <dbReference type="ChEBI" id="CHEBI:30408"/>
    </cofactor>
    <text evidence="1">Binds 1 iron-sulfur cluster per subunit.</text>
</comment>
<comment type="subunit">
    <text evidence="1">Homodimer.</text>
</comment>
<comment type="similarity">
    <text evidence="1">Belongs to the HesB/IscA family.</text>
</comment>
<dbReference type="EMBL" id="CP000680">
    <property type="protein sequence ID" value="ABP86677.1"/>
    <property type="molecule type" value="Genomic_DNA"/>
</dbReference>
<dbReference type="SMR" id="A4XZB1"/>
<dbReference type="STRING" id="399739.Pmen_3930"/>
<dbReference type="KEGG" id="pmy:Pmen_3930"/>
<dbReference type="PATRIC" id="fig|399739.8.peg.3983"/>
<dbReference type="eggNOG" id="COG0316">
    <property type="taxonomic scope" value="Bacteria"/>
</dbReference>
<dbReference type="HOGENOM" id="CLU_069054_5_3_6"/>
<dbReference type="OrthoDB" id="9801228at2"/>
<dbReference type="GO" id="GO:0005829">
    <property type="term" value="C:cytosol"/>
    <property type="evidence" value="ECO:0007669"/>
    <property type="project" value="TreeGrafter"/>
</dbReference>
<dbReference type="GO" id="GO:0051537">
    <property type="term" value="F:2 iron, 2 sulfur cluster binding"/>
    <property type="evidence" value="ECO:0007669"/>
    <property type="project" value="TreeGrafter"/>
</dbReference>
<dbReference type="GO" id="GO:0051539">
    <property type="term" value="F:4 iron, 4 sulfur cluster binding"/>
    <property type="evidence" value="ECO:0007669"/>
    <property type="project" value="TreeGrafter"/>
</dbReference>
<dbReference type="GO" id="GO:0005506">
    <property type="term" value="F:iron ion binding"/>
    <property type="evidence" value="ECO:0007669"/>
    <property type="project" value="UniProtKB-UniRule"/>
</dbReference>
<dbReference type="GO" id="GO:0016226">
    <property type="term" value="P:iron-sulfur cluster assembly"/>
    <property type="evidence" value="ECO:0007669"/>
    <property type="project" value="UniProtKB-UniRule"/>
</dbReference>
<dbReference type="FunFam" id="2.60.300.12:FF:000002">
    <property type="entry name" value="Iron-sulfur cluster insertion protein ErpA"/>
    <property type="match status" value="1"/>
</dbReference>
<dbReference type="Gene3D" id="2.60.300.12">
    <property type="entry name" value="HesB-like domain"/>
    <property type="match status" value="1"/>
</dbReference>
<dbReference type="HAMAP" id="MF_01380">
    <property type="entry name" value="Fe_S_insert_ErpA"/>
    <property type="match status" value="1"/>
</dbReference>
<dbReference type="InterPro" id="IPR000361">
    <property type="entry name" value="FeS_biogenesis"/>
</dbReference>
<dbReference type="InterPro" id="IPR016092">
    <property type="entry name" value="FeS_cluster_insertion"/>
</dbReference>
<dbReference type="InterPro" id="IPR017870">
    <property type="entry name" value="FeS_cluster_insertion_CS"/>
</dbReference>
<dbReference type="InterPro" id="IPR023063">
    <property type="entry name" value="FeS_cluster_insertion_RrpA"/>
</dbReference>
<dbReference type="InterPro" id="IPR035903">
    <property type="entry name" value="HesB-like_dom_sf"/>
</dbReference>
<dbReference type="NCBIfam" id="TIGR00049">
    <property type="entry name" value="iron-sulfur cluster assembly accessory protein"/>
    <property type="match status" value="1"/>
</dbReference>
<dbReference type="NCBIfam" id="NF010147">
    <property type="entry name" value="PRK13623.1"/>
    <property type="match status" value="1"/>
</dbReference>
<dbReference type="PANTHER" id="PTHR43011">
    <property type="entry name" value="IRON-SULFUR CLUSTER ASSEMBLY 2 HOMOLOG, MITOCHONDRIAL"/>
    <property type="match status" value="1"/>
</dbReference>
<dbReference type="PANTHER" id="PTHR43011:SF1">
    <property type="entry name" value="IRON-SULFUR CLUSTER ASSEMBLY 2 HOMOLOG, MITOCHONDRIAL"/>
    <property type="match status" value="1"/>
</dbReference>
<dbReference type="Pfam" id="PF01521">
    <property type="entry name" value="Fe-S_biosyn"/>
    <property type="match status" value="1"/>
</dbReference>
<dbReference type="SUPFAM" id="SSF89360">
    <property type="entry name" value="HesB-like domain"/>
    <property type="match status" value="1"/>
</dbReference>
<dbReference type="PROSITE" id="PS01152">
    <property type="entry name" value="HESB"/>
    <property type="match status" value="1"/>
</dbReference>
<evidence type="ECO:0000255" key="1">
    <source>
        <dbReference type="HAMAP-Rule" id="MF_01380"/>
    </source>
</evidence>
<keyword id="KW-0408">Iron</keyword>
<keyword id="KW-0411">Iron-sulfur</keyword>
<keyword id="KW-0479">Metal-binding</keyword>
<reference key="1">
    <citation type="submission" date="2007-04" db="EMBL/GenBank/DDBJ databases">
        <title>Complete sequence of Pseudomonas mendocina ymp.</title>
        <authorList>
            <consortium name="US DOE Joint Genome Institute"/>
            <person name="Copeland A."/>
            <person name="Lucas S."/>
            <person name="Lapidus A."/>
            <person name="Barry K."/>
            <person name="Glavina del Rio T."/>
            <person name="Dalin E."/>
            <person name="Tice H."/>
            <person name="Pitluck S."/>
            <person name="Kiss H."/>
            <person name="Brettin T."/>
            <person name="Detter J.C."/>
            <person name="Bruce D."/>
            <person name="Han C."/>
            <person name="Schmutz J."/>
            <person name="Larimer F."/>
            <person name="Land M."/>
            <person name="Hauser L."/>
            <person name="Kyrpides N."/>
            <person name="Mikhailova N."/>
            <person name="Hersman L."/>
            <person name="Dubois J."/>
            <person name="Maurice P."/>
            <person name="Richardson P."/>
        </authorList>
    </citation>
    <scope>NUCLEOTIDE SEQUENCE [LARGE SCALE GENOMIC DNA]</scope>
    <source>
        <strain>ymp</strain>
    </source>
</reference>
<protein>
    <recommendedName>
        <fullName evidence="1">Iron-sulfur cluster insertion protein ErpA</fullName>
    </recommendedName>
</protein>
<gene>
    <name evidence="1" type="primary">erpA</name>
    <name type="ordered locus">Pmen_3930</name>
</gene>
<feature type="chain" id="PRO_1000068259" description="Iron-sulfur cluster insertion protein ErpA">
    <location>
        <begin position="1"/>
        <end position="116"/>
    </location>
</feature>
<feature type="binding site" evidence="1">
    <location>
        <position position="44"/>
    </location>
    <ligand>
        <name>iron-sulfur cluster</name>
        <dbReference type="ChEBI" id="CHEBI:30408"/>
    </ligand>
</feature>
<feature type="binding site" evidence="1">
    <location>
        <position position="108"/>
    </location>
    <ligand>
        <name>iron-sulfur cluster</name>
        <dbReference type="ChEBI" id="CHEBI:30408"/>
    </ligand>
</feature>
<feature type="binding site" evidence="1">
    <location>
        <position position="110"/>
    </location>
    <ligand>
        <name>iron-sulfur cluster</name>
        <dbReference type="ChEBI" id="CHEBI:30408"/>
    </ligand>
</feature>
<name>ERPA_ECTM1</name>
<organism>
    <name type="scientific">Ectopseudomonas mendocina (strain ymp)</name>
    <name type="common">Pseudomonas mendocina</name>
    <dbReference type="NCBI Taxonomy" id="399739"/>
    <lineage>
        <taxon>Bacteria</taxon>
        <taxon>Pseudomonadati</taxon>
        <taxon>Pseudomonadota</taxon>
        <taxon>Gammaproteobacteria</taxon>
        <taxon>Pseudomonadales</taxon>
        <taxon>Pseudomonadaceae</taxon>
        <taxon>Ectopseudomonas</taxon>
    </lineage>
</organism>
<proteinExistence type="inferred from homology"/>
<sequence length="116" mass="12489">MSVETFTPAPLHFTQGAASKVKTLVDEEGNPRLKLRVFVTGGGCSGFQYGFTFDEDVAEDDTIVEREGVSLVVDAMSFQYLVGSEVDYQEGLEGSRFVIKNPNATTTCGCGSSFSI</sequence>
<accession>A4XZB1</accession>